<gene>
    <name evidence="2" type="primary">tuf</name>
    <name type="ordered locus">GK0104</name>
</gene>
<protein>
    <recommendedName>
        <fullName evidence="2">Elongation factor Tu</fullName>
        <shortName evidence="2">EF-Tu</shortName>
        <ecNumber evidence="2">3.6.5.3</ecNumber>
    </recommendedName>
</protein>
<evidence type="ECO:0000250" key="1"/>
<evidence type="ECO:0000255" key="2">
    <source>
        <dbReference type="HAMAP-Rule" id="MF_00118"/>
    </source>
</evidence>
<sequence>MAKAKFERTKPHVNIGTIGHVDHGKTTLTAAITTVLAKQGKAEAKAYDQIDAAPEERERGITISTAHVEYETDARHYAHVDCPGHADYVKNMITGAAQMDGAILVVSAADGPMPQTREHILLSRQVGVPYIVVFLNKCDMVDDEELLELVEMEVRDLLSEYDFPGDEVPVIKGSALKALEGDPQWEEKIIELMNAVDEYIPTPQREVDKPFMMPIEDVFSITGRGTVATGRVERGTLKVGDPVEIIGLSDEPKTTTVTGVEMFRKLLDQAEAGDNIGALLRGVSRDEVERGQVLAKPGSITPHTKFKAQVYVLTKEEGGRHTPFFSNYRPQFYFRTTDVTGIITLPEGVEMVMPGDNVEMTVELIAPIAIEEGTKFSIREGGRTVGAGSVSEIIE</sequence>
<comment type="function">
    <text evidence="2">GTP hydrolase that promotes the GTP-dependent binding of aminoacyl-tRNA to the A-site of ribosomes during protein biosynthesis.</text>
</comment>
<comment type="catalytic activity">
    <reaction evidence="2">
        <text>GTP + H2O = GDP + phosphate + H(+)</text>
        <dbReference type="Rhea" id="RHEA:19669"/>
        <dbReference type="ChEBI" id="CHEBI:15377"/>
        <dbReference type="ChEBI" id="CHEBI:15378"/>
        <dbReference type="ChEBI" id="CHEBI:37565"/>
        <dbReference type="ChEBI" id="CHEBI:43474"/>
        <dbReference type="ChEBI" id="CHEBI:58189"/>
        <dbReference type="EC" id="3.6.5.3"/>
    </reaction>
    <physiologicalReaction direction="left-to-right" evidence="2">
        <dbReference type="Rhea" id="RHEA:19670"/>
    </physiologicalReaction>
</comment>
<comment type="subunit">
    <text evidence="2">Monomer.</text>
</comment>
<comment type="subcellular location">
    <subcellularLocation>
        <location evidence="2">Cytoplasm</location>
    </subcellularLocation>
</comment>
<comment type="similarity">
    <text evidence="2">Belongs to the TRAFAC class translation factor GTPase superfamily. Classic translation factor GTPase family. EF-Tu/EF-1A subfamily.</text>
</comment>
<name>EFTU_GEOKA</name>
<proteinExistence type="inferred from homology"/>
<keyword id="KW-0963">Cytoplasm</keyword>
<keyword id="KW-0251">Elongation factor</keyword>
<keyword id="KW-0342">GTP-binding</keyword>
<keyword id="KW-0378">Hydrolase</keyword>
<keyword id="KW-0460">Magnesium</keyword>
<keyword id="KW-0479">Metal-binding</keyword>
<keyword id="KW-0547">Nucleotide-binding</keyword>
<keyword id="KW-0648">Protein biosynthesis</keyword>
<keyword id="KW-1185">Reference proteome</keyword>
<feature type="chain" id="PRO_1000015666" description="Elongation factor Tu">
    <location>
        <begin position="1"/>
        <end position="395"/>
    </location>
</feature>
<feature type="domain" description="tr-type G">
    <location>
        <begin position="10"/>
        <end position="204"/>
    </location>
</feature>
<feature type="region of interest" description="G1" evidence="1">
    <location>
        <begin position="19"/>
        <end position="26"/>
    </location>
</feature>
<feature type="region of interest" description="G2" evidence="1">
    <location>
        <begin position="60"/>
        <end position="64"/>
    </location>
</feature>
<feature type="region of interest" description="G3" evidence="1">
    <location>
        <begin position="81"/>
        <end position="84"/>
    </location>
</feature>
<feature type="region of interest" description="G4" evidence="1">
    <location>
        <begin position="136"/>
        <end position="139"/>
    </location>
</feature>
<feature type="region of interest" description="G5" evidence="1">
    <location>
        <begin position="174"/>
        <end position="176"/>
    </location>
</feature>
<feature type="binding site" evidence="2">
    <location>
        <begin position="19"/>
        <end position="26"/>
    </location>
    <ligand>
        <name>GTP</name>
        <dbReference type="ChEBI" id="CHEBI:37565"/>
    </ligand>
</feature>
<feature type="binding site" evidence="2">
    <location>
        <position position="26"/>
    </location>
    <ligand>
        <name>Mg(2+)</name>
        <dbReference type="ChEBI" id="CHEBI:18420"/>
    </ligand>
</feature>
<feature type="binding site" evidence="2">
    <location>
        <begin position="81"/>
        <end position="85"/>
    </location>
    <ligand>
        <name>GTP</name>
        <dbReference type="ChEBI" id="CHEBI:37565"/>
    </ligand>
</feature>
<feature type="binding site" evidence="2">
    <location>
        <begin position="136"/>
        <end position="139"/>
    </location>
    <ligand>
        <name>GTP</name>
        <dbReference type="ChEBI" id="CHEBI:37565"/>
    </ligand>
</feature>
<reference key="1">
    <citation type="journal article" date="2004" name="Nucleic Acids Res.">
        <title>Thermoadaptation trait revealed by the genome sequence of thermophilic Geobacillus kaustophilus.</title>
        <authorList>
            <person name="Takami H."/>
            <person name="Takaki Y."/>
            <person name="Chee G.-J."/>
            <person name="Nishi S."/>
            <person name="Shimamura S."/>
            <person name="Suzuki H."/>
            <person name="Matsui S."/>
            <person name="Uchiyama I."/>
        </authorList>
    </citation>
    <scope>NUCLEOTIDE SEQUENCE [LARGE SCALE GENOMIC DNA]</scope>
    <source>
        <strain>HTA426</strain>
    </source>
</reference>
<dbReference type="EC" id="3.6.5.3" evidence="2"/>
<dbReference type="EMBL" id="BA000043">
    <property type="protein sequence ID" value="BAD74389.1"/>
    <property type="molecule type" value="Genomic_DNA"/>
</dbReference>
<dbReference type="RefSeq" id="WP_011229619.1">
    <property type="nucleotide sequence ID" value="NC_006510.1"/>
</dbReference>
<dbReference type="SMR" id="Q5L3Z9"/>
<dbReference type="STRING" id="235909.GK0104"/>
<dbReference type="GeneID" id="32062092"/>
<dbReference type="KEGG" id="gka:GK0104"/>
<dbReference type="eggNOG" id="COG0050">
    <property type="taxonomic scope" value="Bacteria"/>
</dbReference>
<dbReference type="HOGENOM" id="CLU_007265_0_1_9"/>
<dbReference type="Proteomes" id="UP000001172">
    <property type="component" value="Chromosome"/>
</dbReference>
<dbReference type="GO" id="GO:0005829">
    <property type="term" value="C:cytosol"/>
    <property type="evidence" value="ECO:0007669"/>
    <property type="project" value="TreeGrafter"/>
</dbReference>
<dbReference type="GO" id="GO:0005525">
    <property type="term" value="F:GTP binding"/>
    <property type="evidence" value="ECO:0007669"/>
    <property type="project" value="UniProtKB-UniRule"/>
</dbReference>
<dbReference type="GO" id="GO:0003924">
    <property type="term" value="F:GTPase activity"/>
    <property type="evidence" value="ECO:0007669"/>
    <property type="project" value="InterPro"/>
</dbReference>
<dbReference type="GO" id="GO:0003746">
    <property type="term" value="F:translation elongation factor activity"/>
    <property type="evidence" value="ECO:0007669"/>
    <property type="project" value="UniProtKB-UniRule"/>
</dbReference>
<dbReference type="CDD" id="cd01884">
    <property type="entry name" value="EF_Tu"/>
    <property type="match status" value="1"/>
</dbReference>
<dbReference type="CDD" id="cd03697">
    <property type="entry name" value="EFTU_II"/>
    <property type="match status" value="1"/>
</dbReference>
<dbReference type="CDD" id="cd03707">
    <property type="entry name" value="EFTU_III"/>
    <property type="match status" value="1"/>
</dbReference>
<dbReference type="FunFam" id="2.40.30.10:FF:000001">
    <property type="entry name" value="Elongation factor Tu"/>
    <property type="match status" value="1"/>
</dbReference>
<dbReference type="FunFam" id="3.40.50.300:FF:000003">
    <property type="entry name" value="Elongation factor Tu"/>
    <property type="match status" value="1"/>
</dbReference>
<dbReference type="Gene3D" id="3.40.50.300">
    <property type="entry name" value="P-loop containing nucleotide triphosphate hydrolases"/>
    <property type="match status" value="1"/>
</dbReference>
<dbReference type="Gene3D" id="2.40.30.10">
    <property type="entry name" value="Translation factors"/>
    <property type="match status" value="2"/>
</dbReference>
<dbReference type="HAMAP" id="MF_00118_B">
    <property type="entry name" value="EF_Tu_B"/>
    <property type="match status" value="1"/>
</dbReference>
<dbReference type="InterPro" id="IPR041709">
    <property type="entry name" value="EF-Tu_GTP-bd"/>
</dbReference>
<dbReference type="InterPro" id="IPR050055">
    <property type="entry name" value="EF-Tu_GTPase"/>
</dbReference>
<dbReference type="InterPro" id="IPR004161">
    <property type="entry name" value="EFTu-like_2"/>
</dbReference>
<dbReference type="InterPro" id="IPR033720">
    <property type="entry name" value="EFTU_2"/>
</dbReference>
<dbReference type="InterPro" id="IPR031157">
    <property type="entry name" value="G_TR_CS"/>
</dbReference>
<dbReference type="InterPro" id="IPR027417">
    <property type="entry name" value="P-loop_NTPase"/>
</dbReference>
<dbReference type="InterPro" id="IPR005225">
    <property type="entry name" value="Small_GTP-bd"/>
</dbReference>
<dbReference type="InterPro" id="IPR000795">
    <property type="entry name" value="T_Tr_GTP-bd_dom"/>
</dbReference>
<dbReference type="InterPro" id="IPR009000">
    <property type="entry name" value="Transl_B-barrel_sf"/>
</dbReference>
<dbReference type="InterPro" id="IPR009001">
    <property type="entry name" value="Transl_elong_EF1A/Init_IF2_C"/>
</dbReference>
<dbReference type="InterPro" id="IPR004541">
    <property type="entry name" value="Transl_elong_EFTu/EF1A_bac/org"/>
</dbReference>
<dbReference type="InterPro" id="IPR004160">
    <property type="entry name" value="Transl_elong_EFTu/EF1A_C"/>
</dbReference>
<dbReference type="NCBIfam" id="TIGR00485">
    <property type="entry name" value="EF-Tu"/>
    <property type="match status" value="1"/>
</dbReference>
<dbReference type="NCBIfam" id="NF000766">
    <property type="entry name" value="PRK00049.1"/>
    <property type="match status" value="1"/>
</dbReference>
<dbReference type="NCBIfam" id="NF009372">
    <property type="entry name" value="PRK12735.1"/>
    <property type="match status" value="1"/>
</dbReference>
<dbReference type="NCBIfam" id="NF009373">
    <property type="entry name" value="PRK12736.1"/>
    <property type="match status" value="1"/>
</dbReference>
<dbReference type="NCBIfam" id="TIGR00231">
    <property type="entry name" value="small_GTP"/>
    <property type="match status" value="1"/>
</dbReference>
<dbReference type="PANTHER" id="PTHR43721:SF22">
    <property type="entry name" value="ELONGATION FACTOR TU, MITOCHONDRIAL"/>
    <property type="match status" value="1"/>
</dbReference>
<dbReference type="PANTHER" id="PTHR43721">
    <property type="entry name" value="ELONGATION FACTOR TU-RELATED"/>
    <property type="match status" value="1"/>
</dbReference>
<dbReference type="Pfam" id="PF00009">
    <property type="entry name" value="GTP_EFTU"/>
    <property type="match status" value="1"/>
</dbReference>
<dbReference type="Pfam" id="PF03144">
    <property type="entry name" value="GTP_EFTU_D2"/>
    <property type="match status" value="1"/>
</dbReference>
<dbReference type="Pfam" id="PF03143">
    <property type="entry name" value="GTP_EFTU_D3"/>
    <property type="match status" value="1"/>
</dbReference>
<dbReference type="PRINTS" id="PR00315">
    <property type="entry name" value="ELONGATNFCT"/>
</dbReference>
<dbReference type="SUPFAM" id="SSF50465">
    <property type="entry name" value="EF-Tu/eEF-1alpha/eIF2-gamma C-terminal domain"/>
    <property type="match status" value="1"/>
</dbReference>
<dbReference type="SUPFAM" id="SSF52540">
    <property type="entry name" value="P-loop containing nucleoside triphosphate hydrolases"/>
    <property type="match status" value="1"/>
</dbReference>
<dbReference type="SUPFAM" id="SSF50447">
    <property type="entry name" value="Translation proteins"/>
    <property type="match status" value="1"/>
</dbReference>
<dbReference type="PROSITE" id="PS00301">
    <property type="entry name" value="G_TR_1"/>
    <property type="match status" value="1"/>
</dbReference>
<dbReference type="PROSITE" id="PS51722">
    <property type="entry name" value="G_TR_2"/>
    <property type="match status" value="1"/>
</dbReference>
<organism>
    <name type="scientific">Geobacillus kaustophilus (strain HTA426)</name>
    <dbReference type="NCBI Taxonomy" id="235909"/>
    <lineage>
        <taxon>Bacteria</taxon>
        <taxon>Bacillati</taxon>
        <taxon>Bacillota</taxon>
        <taxon>Bacilli</taxon>
        <taxon>Bacillales</taxon>
        <taxon>Anoxybacillaceae</taxon>
        <taxon>Geobacillus</taxon>
        <taxon>Geobacillus thermoleovorans group</taxon>
    </lineage>
</organism>
<accession>Q5L3Z9</accession>